<proteinExistence type="inferred from homology"/>
<comment type="function">
    <text evidence="1">The RuvA-RuvB-RuvC complex processes Holliday junction (HJ) DNA during genetic recombination and DNA repair, while the RuvA-RuvB complex plays an important role in the rescue of blocked DNA replication forks via replication fork reversal (RFR). RuvA specifically binds to HJ cruciform DNA, conferring on it an open structure. The RuvB hexamer acts as an ATP-dependent pump, pulling dsDNA into and through the RuvAB complex. HJ branch migration allows RuvC to scan DNA until it finds its consensus sequence, where it cleaves and resolves the cruciform DNA.</text>
</comment>
<comment type="subunit">
    <text evidence="1">Homotetramer. Forms an RuvA(8)-RuvB(12)-Holliday junction (HJ) complex. HJ DNA is sandwiched between 2 RuvA tetramers; dsDNA enters through RuvA and exits via RuvB. An RuvB hexamer assembles on each DNA strand where it exits the tetramer. Each RuvB hexamer is contacted by two RuvA subunits (via domain III) on 2 adjacent RuvB subunits; this complex drives branch migration. In the full resolvosome a probable DNA-RuvA(4)-RuvB(12)-RuvC(2) complex forms which resolves the HJ.</text>
</comment>
<comment type="subcellular location">
    <subcellularLocation>
        <location evidence="1">Cytoplasm</location>
    </subcellularLocation>
</comment>
<comment type="domain">
    <text evidence="1">Has three domains with a flexible linker between the domains II and III and assumes an 'L' shape. Domain III is highly mobile and contacts RuvB.</text>
</comment>
<comment type="similarity">
    <text evidence="1">Belongs to the RuvA family.</text>
</comment>
<feature type="chain" id="PRO_1000090357" description="Holliday junction branch migration complex subunit RuvA">
    <location>
        <begin position="1"/>
        <end position="204"/>
    </location>
</feature>
<feature type="region of interest" description="Domain I" evidence="1">
    <location>
        <begin position="1"/>
        <end position="64"/>
    </location>
</feature>
<feature type="region of interest" description="Domain II" evidence="1">
    <location>
        <begin position="65"/>
        <end position="143"/>
    </location>
</feature>
<feature type="region of interest" description="Flexible linker" evidence="1">
    <location>
        <begin position="144"/>
        <end position="151"/>
    </location>
</feature>
<feature type="region of interest" description="Domain III" evidence="1">
    <location>
        <begin position="152"/>
        <end position="204"/>
    </location>
</feature>
<reference key="1">
    <citation type="journal article" date="2010" name="Appl. Environ. Microbiol.">
        <title>Conserved symbiotic plasmid DNA sequences in the multireplicon pangenomic structure of Rhizobium etli.</title>
        <authorList>
            <person name="Gonzalez V."/>
            <person name="Acosta J.L."/>
            <person name="Santamaria R.I."/>
            <person name="Bustos P."/>
            <person name="Fernandez J.L."/>
            <person name="Hernandez Gonzalez I.L."/>
            <person name="Diaz R."/>
            <person name="Flores M."/>
            <person name="Palacios R."/>
            <person name="Mora J."/>
            <person name="Davila G."/>
        </authorList>
    </citation>
    <scope>NUCLEOTIDE SEQUENCE [LARGE SCALE GENOMIC DNA]</scope>
    <source>
        <strain>CIAT 652</strain>
    </source>
</reference>
<keyword id="KW-0963">Cytoplasm</keyword>
<keyword id="KW-0227">DNA damage</keyword>
<keyword id="KW-0233">DNA recombination</keyword>
<keyword id="KW-0234">DNA repair</keyword>
<keyword id="KW-0238">DNA-binding</keyword>
<dbReference type="EMBL" id="CP001074">
    <property type="protein sequence ID" value="ACE92658.1"/>
    <property type="molecule type" value="Genomic_DNA"/>
</dbReference>
<dbReference type="SMR" id="B3PYZ4"/>
<dbReference type="KEGG" id="rec:RHECIAT_CH0003720"/>
<dbReference type="eggNOG" id="COG0632">
    <property type="taxonomic scope" value="Bacteria"/>
</dbReference>
<dbReference type="HOGENOM" id="CLU_087936_3_0_5"/>
<dbReference type="Proteomes" id="UP000008817">
    <property type="component" value="Chromosome"/>
</dbReference>
<dbReference type="GO" id="GO:0005737">
    <property type="term" value="C:cytoplasm"/>
    <property type="evidence" value="ECO:0007669"/>
    <property type="project" value="UniProtKB-SubCell"/>
</dbReference>
<dbReference type="GO" id="GO:0009379">
    <property type="term" value="C:Holliday junction helicase complex"/>
    <property type="evidence" value="ECO:0007669"/>
    <property type="project" value="InterPro"/>
</dbReference>
<dbReference type="GO" id="GO:0048476">
    <property type="term" value="C:Holliday junction resolvase complex"/>
    <property type="evidence" value="ECO:0007669"/>
    <property type="project" value="UniProtKB-UniRule"/>
</dbReference>
<dbReference type="GO" id="GO:0005524">
    <property type="term" value="F:ATP binding"/>
    <property type="evidence" value="ECO:0007669"/>
    <property type="project" value="InterPro"/>
</dbReference>
<dbReference type="GO" id="GO:0000400">
    <property type="term" value="F:four-way junction DNA binding"/>
    <property type="evidence" value="ECO:0007669"/>
    <property type="project" value="UniProtKB-UniRule"/>
</dbReference>
<dbReference type="GO" id="GO:0009378">
    <property type="term" value="F:four-way junction helicase activity"/>
    <property type="evidence" value="ECO:0007669"/>
    <property type="project" value="InterPro"/>
</dbReference>
<dbReference type="GO" id="GO:0006310">
    <property type="term" value="P:DNA recombination"/>
    <property type="evidence" value="ECO:0007669"/>
    <property type="project" value="UniProtKB-UniRule"/>
</dbReference>
<dbReference type="GO" id="GO:0006281">
    <property type="term" value="P:DNA repair"/>
    <property type="evidence" value="ECO:0007669"/>
    <property type="project" value="UniProtKB-UniRule"/>
</dbReference>
<dbReference type="Gene3D" id="1.10.150.20">
    <property type="entry name" value="5' to 3' exonuclease, C-terminal subdomain"/>
    <property type="match status" value="1"/>
</dbReference>
<dbReference type="Gene3D" id="1.10.8.10">
    <property type="entry name" value="DNA helicase RuvA subunit, C-terminal domain"/>
    <property type="match status" value="1"/>
</dbReference>
<dbReference type="Gene3D" id="2.40.50.140">
    <property type="entry name" value="Nucleic acid-binding proteins"/>
    <property type="match status" value="1"/>
</dbReference>
<dbReference type="HAMAP" id="MF_00031">
    <property type="entry name" value="DNA_HJ_migration_RuvA"/>
    <property type="match status" value="1"/>
</dbReference>
<dbReference type="InterPro" id="IPR013849">
    <property type="entry name" value="DNA_helicase_Holl-junc_RuvA_I"/>
</dbReference>
<dbReference type="InterPro" id="IPR012340">
    <property type="entry name" value="NA-bd_OB-fold"/>
</dbReference>
<dbReference type="InterPro" id="IPR000085">
    <property type="entry name" value="RuvA"/>
</dbReference>
<dbReference type="InterPro" id="IPR010994">
    <property type="entry name" value="RuvA_2-like"/>
</dbReference>
<dbReference type="InterPro" id="IPR011114">
    <property type="entry name" value="RuvA_C"/>
</dbReference>
<dbReference type="InterPro" id="IPR036267">
    <property type="entry name" value="RuvA_C_sf"/>
</dbReference>
<dbReference type="NCBIfam" id="TIGR00084">
    <property type="entry name" value="ruvA"/>
    <property type="match status" value="1"/>
</dbReference>
<dbReference type="Pfam" id="PF14520">
    <property type="entry name" value="HHH_5"/>
    <property type="match status" value="1"/>
</dbReference>
<dbReference type="Pfam" id="PF07499">
    <property type="entry name" value="RuvA_C"/>
    <property type="match status" value="1"/>
</dbReference>
<dbReference type="Pfam" id="PF01330">
    <property type="entry name" value="RuvA_N"/>
    <property type="match status" value="1"/>
</dbReference>
<dbReference type="SUPFAM" id="SSF46929">
    <property type="entry name" value="DNA helicase RuvA subunit, C-terminal domain"/>
    <property type="match status" value="1"/>
</dbReference>
<dbReference type="SUPFAM" id="SSF50249">
    <property type="entry name" value="Nucleic acid-binding proteins"/>
    <property type="match status" value="1"/>
</dbReference>
<dbReference type="SUPFAM" id="SSF47781">
    <property type="entry name" value="RuvA domain 2-like"/>
    <property type="match status" value="1"/>
</dbReference>
<accession>B3PYZ4</accession>
<organism>
    <name type="scientific">Rhizobium etli (strain CIAT 652)</name>
    <dbReference type="NCBI Taxonomy" id="491916"/>
    <lineage>
        <taxon>Bacteria</taxon>
        <taxon>Pseudomonadati</taxon>
        <taxon>Pseudomonadota</taxon>
        <taxon>Alphaproteobacteria</taxon>
        <taxon>Hyphomicrobiales</taxon>
        <taxon>Rhizobiaceae</taxon>
        <taxon>Rhizobium/Agrobacterium group</taxon>
        <taxon>Rhizobium</taxon>
    </lineage>
</organism>
<name>RUVA_RHIE6</name>
<evidence type="ECO:0000255" key="1">
    <source>
        <dbReference type="HAMAP-Rule" id="MF_00031"/>
    </source>
</evidence>
<protein>
    <recommendedName>
        <fullName evidence="1">Holliday junction branch migration complex subunit RuvA</fullName>
    </recommendedName>
</protein>
<sequence>MIGKLKGTIDEIGEDYVLVDVHGVCYVAHCSARTLSKLGSAGEACVLFIETYVREDQLKLFGFMTALEREWFNLLQSVQGVGAKVALAVLSTLTPSELANAIALQDRAAVSRAPGVGPKVAMRLVTELKNRAPAFAGEAINIALKQELGEGVAAAPVADAVSALTNLGYSRDQAANAVAAAMKTAGDGADSAKLIRLGLKELAR</sequence>
<gene>
    <name evidence="1" type="primary">ruvA</name>
    <name type="ordered locus">RHECIAT_CH0003720</name>
</gene>